<comment type="function">
    <text evidence="1">One of the proteins required for the normal export of preproteins out of the cell cytoplasm. It is a molecular chaperone that binds to a subset of precursor proteins, maintaining them in a translocation-competent state. It also specifically binds to its receptor SecA.</text>
</comment>
<comment type="subunit">
    <text evidence="1">Homotetramer, a dimer of dimers. One homotetramer interacts with 1 SecA dimer.</text>
</comment>
<comment type="subcellular location">
    <subcellularLocation>
        <location evidence="1">Cytoplasm</location>
    </subcellularLocation>
</comment>
<comment type="similarity">
    <text evidence="1">Belongs to the SecB family.</text>
</comment>
<protein>
    <recommendedName>
        <fullName evidence="1">Protein-export protein SecB</fullName>
    </recommendedName>
</protein>
<organism>
    <name type="scientific">Shewanella denitrificans (strain OS217 / ATCC BAA-1090 / DSM 15013)</name>
    <dbReference type="NCBI Taxonomy" id="318161"/>
    <lineage>
        <taxon>Bacteria</taxon>
        <taxon>Pseudomonadati</taxon>
        <taxon>Pseudomonadota</taxon>
        <taxon>Gammaproteobacteria</taxon>
        <taxon>Alteromonadales</taxon>
        <taxon>Shewanellaceae</taxon>
        <taxon>Shewanella</taxon>
    </lineage>
</organism>
<sequence length="164" mass="18096">MAEVANNEQQEQAPQFNIQRIYTKDLSFETPNSPAVFQKEWNPEVKLDLDTRSNKLSDDVYEVVLSLTVTAKNGEETAFLCEVQQAGIFSIQGLTEQQLAHSLGAYCPNVLFPYARELVGSLVGRGTFPQLNLAPVNFDALFAQYVQQRQAAAAEAPAVEEANA</sequence>
<gene>
    <name evidence="1" type="primary">secB</name>
    <name type="ordered locus">Sden_3696</name>
</gene>
<keyword id="KW-0143">Chaperone</keyword>
<keyword id="KW-0963">Cytoplasm</keyword>
<keyword id="KW-0653">Protein transport</keyword>
<keyword id="KW-1185">Reference proteome</keyword>
<keyword id="KW-0811">Translocation</keyword>
<keyword id="KW-0813">Transport</keyword>
<proteinExistence type="inferred from homology"/>
<accession>Q12HV7</accession>
<dbReference type="EMBL" id="CP000302">
    <property type="protein sequence ID" value="ABE56969.1"/>
    <property type="molecule type" value="Genomic_DNA"/>
</dbReference>
<dbReference type="RefSeq" id="WP_011498107.1">
    <property type="nucleotide sequence ID" value="NC_007954.1"/>
</dbReference>
<dbReference type="SMR" id="Q12HV7"/>
<dbReference type="STRING" id="318161.Sden_3696"/>
<dbReference type="KEGG" id="sdn:Sden_3696"/>
<dbReference type="eggNOG" id="COG1952">
    <property type="taxonomic scope" value="Bacteria"/>
</dbReference>
<dbReference type="HOGENOM" id="CLU_111574_1_0_6"/>
<dbReference type="OrthoDB" id="9795145at2"/>
<dbReference type="Proteomes" id="UP000001982">
    <property type="component" value="Chromosome"/>
</dbReference>
<dbReference type="GO" id="GO:0005737">
    <property type="term" value="C:cytoplasm"/>
    <property type="evidence" value="ECO:0007669"/>
    <property type="project" value="UniProtKB-SubCell"/>
</dbReference>
<dbReference type="GO" id="GO:0051082">
    <property type="term" value="F:unfolded protein binding"/>
    <property type="evidence" value="ECO:0007669"/>
    <property type="project" value="InterPro"/>
</dbReference>
<dbReference type="GO" id="GO:0006457">
    <property type="term" value="P:protein folding"/>
    <property type="evidence" value="ECO:0007669"/>
    <property type="project" value="UniProtKB-UniRule"/>
</dbReference>
<dbReference type="GO" id="GO:0051262">
    <property type="term" value="P:protein tetramerization"/>
    <property type="evidence" value="ECO:0007669"/>
    <property type="project" value="InterPro"/>
</dbReference>
<dbReference type="GO" id="GO:0015031">
    <property type="term" value="P:protein transport"/>
    <property type="evidence" value="ECO:0007669"/>
    <property type="project" value="UniProtKB-UniRule"/>
</dbReference>
<dbReference type="Gene3D" id="3.10.420.10">
    <property type="entry name" value="SecB-like"/>
    <property type="match status" value="1"/>
</dbReference>
<dbReference type="HAMAP" id="MF_00821">
    <property type="entry name" value="SecB"/>
    <property type="match status" value="1"/>
</dbReference>
<dbReference type="InterPro" id="IPR003708">
    <property type="entry name" value="SecB"/>
</dbReference>
<dbReference type="InterPro" id="IPR035958">
    <property type="entry name" value="SecB-like_sf"/>
</dbReference>
<dbReference type="NCBIfam" id="NF004392">
    <property type="entry name" value="PRK05751.1-3"/>
    <property type="match status" value="1"/>
</dbReference>
<dbReference type="NCBIfam" id="NF004393">
    <property type="entry name" value="PRK05751.1-4"/>
    <property type="match status" value="1"/>
</dbReference>
<dbReference type="NCBIfam" id="TIGR00809">
    <property type="entry name" value="secB"/>
    <property type="match status" value="1"/>
</dbReference>
<dbReference type="PANTHER" id="PTHR36918">
    <property type="match status" value="1"/>
</dbReference>
<dbReference type="PANTHER" id="PTHR36918:SF1">
    <property type="entry name" value="PROTEIN-EXPORT PROTEIN SECB"/>
    <property type="match status" value="1"/>
</dbReference>
<dbReference type="Pfam" id="PF02556">
    <property type="entry name" value="SecB"/>
    <property type="match status" value="1"/>
</dbReference>
<dbReference type="PRINTS" id="PR01594">
    <property type="entry name" value="SECBCHAPRONE"/>
</dbReference>
<dbReference type="SUPFAM" id="SSF54611">
    <property type="entry name" value="SecB-like"/>
    <property type="match status" value="1"/>
</dbReference>
<name>SECB_SHEDO</name>
<evidence type="ECO:0000255" key="1">
    <source>
        <dbReference type="HAMAP-Rule" id="MF_00821"/>
    </source>
</evidence>
<reference key="1">
    <citation type="submission" date="2006-03" db="EMBL/GenBank/DDBJ databases">
        <title>Complete sequence of Shewanella denitrificans OS217.</title>
        <authorList>
            <consortium name="US DOE Joint Genome Institute"/>
            <person name="Copeland A."/>
            <person name="Lucas S."/>
            <person name="Lapidus A."/>
            <person name="Barry K."/>
            <person name="Detter J.C."/>
            <person name="Glavina del Rio T."/>
            <person name="Hammon N."/>
            <person name="Israni S."/>
            <person name="Dalin E."/>
            <person name="Tice H."/>
            <person name="Pitluck S."/>
            <person name="Brettin T."/>
            <person name="Bruce D."/>
            <person name="Han C."/>
            <person name="Tapia R."/>
            <person name="Gilna P."/>
            <person name="Kiss H."/>
            <person name="Schmutz J."/>
            <person name="Larimer F."/>
            <person name="Land M."/>
            <person name="Hauser L."/>
            <person name="Kyrpides N."/>
            <person name="Lykidis A."/>
            <person name="Richardson P."/>
        </authorList>
    </citation>
    <scope>NUCLEOTIDE SEQUENCE [LARGE SCALE GENOMIC DNA]</scope>
    <source>
        <strain>OS217 / ATCC BAA-1090 / DSM 15013</strain>
    </source>
</reference>
<feature type="chain" id="PRO_1000062519" description="Protein-export protein SecB">
    <location>
        <begin position="1"/>
        <end position="164"/>
    </location>
</feature>